<keyword id="KW-0169">Cobalamin biosynthesis</keyword>
<keyword id="KW-0489">Methyltransferase</keyword>
<keyword id="KW-1185">Reference proteome</keyword>
<keyword id="KW-0949">S-adenosyl-L-methionine</keyword>
<keyword id="KW-0808">Transferase</keyword>
<protein>
    <recommendedName>
        <fullName>Precorrin-4 C(11)-methyltransferase</fullName>
        <ecNumber>2.1.1.133</ecNumber>
    </recommendedName>
    <alternativeName>
        <fullName>Precorrin-3 methylase</fullName>
    </alternativeName>
</protein>
<reference key="1">
    <citation type="journal article" date="2002" name="J. Bacteriol.">
        <title>Whole-genome comparison of Mycobacterium tuberculosis clinical and laboratory strains.</title>
        <authorList>
            <person name="Fleischmann R.D."/>
            <person name="Alland D."/>
            <person name="Eisen J.A."/>
            <person name="Carpenter L."/>
            <person name="White O."/>
            <person name="Peterson J.D."/>
            <person name="DeBoy R.T."/>
            <person name="Dodson R.J."/>
            <person name="Gwinn M.L."/>
            <person name="Haft D.H."/>
            <person name="Hickey E.K."/>
            <person name="Kolonay J.F."/>
            <person name="Nelson W.C."/>
            <person name="Umayam L.A."/>
            <person name="Ermolaeva M.D."/>
            <person name="Salzberg S.L."/>
            <person name="Delcher A."/>
            <person name="Utterback T.R."/>
            <person name="Weidman J.F."/>
            <person name="Khouri H.M."/>
            <person name="Gill J."/>
            <person name="Mikula A."/>
            <person name="Bishai W."/>
            <person name="Jacobs W.R. Jr."/>
            <person name="Venter J.C."/>
            <person name="Fraser C.M."/>
        </authorList>
    </citation>
    <scope>NUCLEOTIDE SEQUENCE [LARGE SCALE GENOMIC DNA]</scope>
    <source>
        <strain>CDC 1551 / Oshkosh</strain>
    </source>
</reference>
<name>COBM_MYCTO</name>
<proteinExistence type="inferred from homology"/>
<organism>
    <name type="scientific">Mycobacterium tuberculosis (strain CDC 1551 / Oshkosh)</name>
    <dbReference type="NCBI Taxonomy" id="83331"/>
    <lineage>
        <taxon>Bacteria</taxon>
        <taxon>Bacillati</taxon>
        <taxon>Actinomycetota</taxon>
        <taxon>Actinomycetes</taxon>
        <taxon>Mycobacteriales</taxon>
        <taxon>Mycobacteriaceae</taxon>
        <taxon>Mycobacterium</taxon>
        <taxon>Mycobacterium tuberculosis complex</taxon>
    </lineage>
</organism>
<comment type="function">
    <text evidence="1">Catalyzes the methylation of C-11 in precorrin-4 to form precorrin-5.</text>
</comment>
<comment type="catalytic activity">
    <reaction>
        <text>precorrin-4 + S-adenosyl-L-methionine = precorrin-5 + S-adenosyl-L-homocysteine</text>
        <dbReference type="Rhea" id="RHEA:22012"/>
        <dbReference type="ChEBI" id="CHEBI:57769"/>
        <dbReference type="ChEBI" id="CHEBI:57856"/>
        <dbReference type="ChEBI" id="CHEBI:59789"/>
        <dbReference type="ChEBI" id="CHEBI:77871"/>
        <dbReference type="EC" id="2.1.1.133"/>
    </reaction>
</comment>
<comment type="pathway">
    <text>Cofactor biosynthesis; adenosylcobalamin biosynthesis; cob(II)yrinate a,c-diamide from precorrin-2 (aerobic route): step 4/10.</text>
</comment>
<comment type="similarity">
    <text evidence="2">Belongs to the precorrin methyltransferase family.</text>
</comment>
<comment type="sequence caution" evidence="2">
    <conflict type="erroneous initiation">
        <sequence resource="EMBL-CDS" id="AAK46411"/>
    </conflict>
</comment>
<gene>
    <name type="primary">cobM</name>
    <name type="ordered locus">MT2131</name>
</gene>
<feature type="chain" id="PRO_0000428393" description="Precorrin-4 C(11)-methyltransferase">
    <location>
        <begin position="1"/>
        <end position="251"/>
    </location>
</feature>
<evidence type="ECO:0000250" key="1"/>
<evidence type="ECO:0000305" key="2"/>
<sequence length="251" mass="26420">MTVYFIGAGPGAADLITVRGQRLLQRCPVCLYAGSIMPDDLLAQCPPGATIVDTGPLTLEQIVRKLADADADGRDVARLHSGDPSLYSALAEQCRELDALGIGYEIVPGVPAFAAAAAALKRELTVPGVAQTVTLTRVATLSTPIPPGEDLAALARSRATLVLHLAAAQIDAIVPRLLDGGYRPETPVAVVAFASWPQQRTLRGTLADIAARMHDAKITRTAVIVVGDVLTAEGFTDSYLYSVARHGRYAQ</sequence>
<dbReference type="EC" id="2.1.1.133"/>
<dbReference type="EMBL" id="AE000516">
    <property type="protein sequence ID" value="AAK46411.1"/>
    <property type="status" value="ALT_INIT"/>
    <property type="molecule type" value="Genomic_DNA"/>
</dbReference>
<dbReference type="PIR" id="B70765">
    <property type="entry name" value="B70765"/>
</dbReference>
<dbReference type="RefSeq" id="WP_003906733.1">
    <property type="nucleotide sequence ID" value="NZ_KK341227.1"/>
</dbReference>
<dbReference type="SMR" id="P9WGB0"/>
<dbReference type="KEGG" id="mtc:MT2131"/>
<dbReference type="PATRIC" id="fig|83331.31.peg.2299"/>
<dbReference type="HOGENOM" id="CLU_011276_7_1_11"/>
<dbReference type="UniPathway" id="UPA00148">
    <property type="reaction ID" value="UER00215"/>
</dbReference>
<dbReference type="Proteomes" id="UP000001020">
    <property type="component" value="Chromosome"/>
</dbReference>
<dbReference type="GO" id="GO:0046026">
    <property type="term" value="F:precorrin-4 C11-methyltransferase activity"/>
    <property type="evidence" value="ECO:0007669"/>
    <property type="project" value="UniProtKB-EC"/>
</dbReference>
<dbReference type="GO" id="GO:0009236">
    <property type="term" value="P:cobalamin biosynthetic process"/>
    <property type="evidence" value="ECO:0007669"/>
    <property type="project" value="UniProtKB-UniPathway"/>
</dbReference>
<dbReference type="GO" id="GO:0032259">
    <property type="term" value="P:methylation"/>
    <property type="evidence" value="ECO:0007669"/>
    <property type="project" value="UniProtKB-KW"/>
</dbReference>
<dbReference type="CDD" id="cd11641">
    <property type="entry name" value="Precorrin-4_C11-MT"/>
    <property type="match status" value="1"/>
</dbReference>
<dbReference type="Gene3D" id="3.40.1010.10">
    <property type="entry name" value="Cobalt-precorrin-4 Transmethylase, Domain 1"/>
    <property type="match status" value="1"/>
</dbReference>
<dbReference type="Gene3D" id="3.30.950.10">
    <property type="entry name" value="Methyltransferase, Cobalt-precorrin-4 Transmethylase, Domain 2"/>
    <property type="match status" value="1"/>
</dbReference>
<dbReference type="InterPro" id="IPR000878">
    <property type="entry name" value="4pyrrol_Mease"/>
</dbReference>
<dbReference type="InterPro" id="IPR035996">
    <property type="entry name" value="4pyrrol_Methylase_sf"/>
</dbReference>
<dbReference type="InterPro" id="IPR014777">
    <property type="entry name" value="4pyrrole_Mease_sub1"/>
</dbReference>
<dbReference type="InterPro" id="IPR014776">
    <property type="entry name" value="4pyrrole_Mease_sub2"/>
</dbReference>
<dbReference type="InterPro" id="IPR006362">
    <property type="entry name" value="Cbl_synth_CobM/CibF"/>
</dbReference>
<dbReference type="InterPro" id="IPR050161">
    <property type="entry name" value="Siro_Cobalamin_biosynth"/>
</dbReference>
<dbReference type="InterPro" id="IPR003043">
    <property type="entry name" value="Uropor_MeTrfase_CS"/>
</dbReference>
<dbReference type="NCBIfam" id="TIGR01465">
    <property type="entry name" value="cobM_cbiF"/>
    <property type="match status" value="1"/>
</dbReference>
<dbReference type="PANTHER" id="PTHR45790:SF4">
    <property type="entry name" value="COBALT-PRECORRIN-4 C(11)-METHYLTRANSFERASE"/>
    <property type="match status" value="1"/>
</dbReference>
<dbReference type="PANTHER" id="PTHR45790">
    <property type="entry name" value="SIROHEME SYNTHASE-RELATED"/>
    <property type="match status" value="1"/>
</dbReference>
<dbReference type="Pfam" id="PF00590">
    <property type="entry name" value="TP_methylase"/>
    <property type="match status" value="1"/>
</dbReference>
<dbReference type="SUPFAM" id="SSF53790">
    <property type="entry name" value="Tetrapyrrole methylase"/>
    <property type="match status" value="1"/>
</dbReference>
<dbReference type="PROSITE" id="PS00839">
    <property type="entry name" value="SUMT_1"/>
    <property type="match status" value="1"/>
</dbReference>
<dbReference type="PROSITE" id="PS00840">
    <property type="entry name" value="SUMT_2"/>
    <property type="match status" value="1"/>
</dbReference>
<accession>P9WGB0</accession>
<accession>L0TB96</accession>
<accession>Q10672</accession>